<sequence length="160" mass="18407">MTKKKAYKPGSATIAQNKRARHEYFIEEEFEAGLALQGWEVKSLRAGKANISDSYVMFKNGEAFLFGATITPLNVASTHVVCEPMRTRKLLLNKRELDSLFGRVNREGYTVVALSMYWKNAWVKVKIGVAKGKKDNDKRDDIRDREWKLDKARIMKHANR</sequence>
<accession>Q1CAH5</accession>
<gene>
    <name evidence="1" type="primary">smpB</name>
    <name type="ordered locus">YPA_0579</name>
</gene>
<dbReference type="EMBL" id="CP000308">
    <property type="protein sequence ID" value="ABG12547.1"/>
    <property type="status" value="ALT_INIT"/>
    <property type="molecule type" value="Genomic_DNA"/>
</dbReference>
<dbReference type="RefSeq" id="WP_002210714.1">
    <property type="nucleotide sequence ID" value="NZ_CP009906.1"/>
</dbReference>
<dbReference type="SMR" id="Q1CAH5"/>
<dbReference type="GeneID" id="57977237"/>
<dbReference type="KEGG" id="ypa:YPA_0579"/>
<dbReference type="Proteomes" id="UP000001971">
    <property type="component" value="Chromosome"/>
</dbReference>
<dbReference type="GO" id="GO:0005829">
    <property type="term" value="C:cytosol"/>
    <property type="evidence" value="ECO:0007669"/>
    <property type="project" value="TreeGrafter"/>
</dbReference>
<dbReference type="GO" id="GO:0003723">
    <property type="term" value="F:RNA binding"/>
    <property type="evidence" value="ECO:0007669"/>
    <property type="project" value="UniProtKB-UniRule"/>
</dbReference>
<dbReference type="GO" id="GO:0070929">
    <property type="term" value="P:trans-translation"/>
    <property type="evidence" value="ECO:0007669"/>
    <property type="project" value="UniProtKB-UniRule"/>
</dbReference>
<dbReference type="CDD" id="cd09294">
    <property type="entry name" value="SmpB"/>
    <property type="match status" value="1"/>
</dbReference>
<dbReference type="Gene3D" id="2.40.280.10">
    <property type="match status" value="1"/>
</dbReference>
<dbReference type="HAMAP" id="MF_00023">
    <property type="entry name" value="SmpB"/>
    <property type="match status" value="1"/>
</dbReference>
<dbReference type="InterPro" id="IPR023620">
    <property type="entry name" value="SmpB"/>
</dbReference>
<dbReference type="InterPro" id="IPR000037">
    <property type="entry name" value="SsrA-bd_prot"/>
</dbReference>
<dbReference type="InterPro" id="IPR020081">
    <property type="entry name" value="SsrA-bd_prot_CS"/>
</dbReference>
<dbReference type="NCBIfam" id="NF003843">
    <property type="entry name" value="PRK05422.1"/>
    <property type="match status" value="1"/>
</dbReference>
<dbReference type="NCBIfam" id="TIGR00086">
    <property type="entry name" value="smpB"/>
    <property type="match status" value="1"/>
</dbReference>
<dbReference type="PANTHER" id="PTHR30308:SF2">
    <property type="entry name" value="SSRA-BINDING PROTEIN"/>
    <property type="match status" value="1"/>
</dbReference>
<dbReference type="PANTHER" id="PTHR30308">
    <property type="entry name" value="TMRNA-BINDING COMPONENT OF TRANS-TRANSLATION TAGGING COMPLEX"/>
    <property type="match status" value="1"/>
</dbReference>
<dbReference type="Pfam" id="PF01668">
    <property type="entry name" value="SmpB"/>
    <property type="match status" value="1"/>
</dbReference>
<dbReference type="SUPFAM" id="SSF74982">
    <property type="entry name" value="Small protein B (SmpB)"/>
    <property type="match status" value="1"/>
</dbReference>
<dbReference type="PROSITE" id="PS01317">
    <property type="entry name" value="SSRP"/>
    <property type="match status" value="1"/>
</dbReference>
<feature type="chain" id="PRO_0000331111" description="SsrA-binding protein">
    <location>
        <begin position="1"/>
        <end position="160"/>
    </location>
</feature>
<keyword id="KW-0963">Cytoplasm</keyword>
<keyword id="KW-0694">RNA-binding</keyword>
<proteinExistence type="inferred from homology"/>
<name>SSRP_YERPA</name>
<reference key="1">
    <citation type="journal article" date="2006" name="J. Bacteriol.">
        <title>Complete genome sequence of Yersinia pestis strains Antiqua and Nepal516: evidence of gene reduction in an emerging pathogen.</title>
        <authorList>
            <person name="Chain P.S.G."/>
            <person name="Hu P."/>
            <person name="Malfatti S.A."/>
            <person name="Radnedge L."/>
            <person name="Larimer F."/>
            <person name="Vergez L.M."/>
            <person name="Worsham P."/>
            <person name="Chu M.C."/>
            <person name="Andersen G.L."/>
        </authorList>
    </citation>
    <scope>NUCLEOTIDE SEQUENCE [LARGE SCALE GENOMIC DNA]</scope>
    <source>
        <strain>Antiqua</strain>
    </source>
</reference>
<protein>
    <recommendedName>
        <fullName evidence="1">SsrA-binding protein</fullName>
    </recommendedName>
    <alternativeName>
        <fullName evidence="1">Small protein B</fullName>
    </alternativeName>
</protein>
<evidence type="ECO:0000255" key="1">
    <source>
        <dbReference type="HAMAP-Rule" id="MF_00023"/>
    </source>
</evidence>
<evidence type="ECO:0000305" key="2"/>
<comment type="function">
    <text evidence="1">Required for rescue of stalled ribosomes mediated by trans-translation. Binds to transfer-messenger RNA (tmRNA), required for stable association of tmRNA with ribosomes. tmRNA and SmpB together mimic tRNA shape, replacing the anticodon stem-loop with SmpB. tmRNA is encoded by the ssrA gene; the 2 termini fold to resemble tRNA(Ala) and it encodes a 'tag peptide', a short internal open reading frame. During trans-translation Ala-aminoacylated tmRNA acts like a tRNA, entering the A-site of stalled ribosomes, displacing the stalled mRNA. The ribosome then switches to translate the ORF on the tmRNA; the nascent peptide is terminated with the 'tag peptide' encoded by the tmRNA and targeted for degradation. The ribosome is freed to recommence translation, which seems to be the essential function of trans-translation.</text>
</comment>
<comment type="subcellular location">
    <subcellularLocation>
        <location evidence="1">Cytoplasm</location>
    </subcellularLocation>
    <text evidence="1">The tmRNA-SmpB complex associates with stalled 70S ribosomes.</text>
</comment>
<comment type="similarity">
    <text evidence="1">Belongs to the SmpB family.</text>
</comment>
<comment type="sequence caution" evidence="2">
    <conflict type="erroneous initiation">
        <sequence resource="EMBL-CDS" id="ABG12547"/>
    </conflict>
    <text>Extended N-terminus.</text>
</comment>
<organism>
    <name type="scientific">Yersinia pestis bv. Antiqua (strain Antiqua)</name>
    <dbReference type="NCBI Taxonomy" id="360102"/>
    <lineage>
        <taxon>Bacteria</taxon>
        <taxon>Pseudomonadati</taxon>
        <taxon>Pseudomonadota</taxon>
        <taxon>Gammaproteobacteria</taxon>
        <taxon>Enterobacterales</taxon>
        <taxon>Yersiniaceae</taxon>
        <taxon>Yersinia</taxon>
    </lineage>
</organism>